<evidence type="ECO:0000255" key="1"/>
<evidence type="ECO:0000255" key="2">
    <source>
        <dbReference type="HAMAP-Rule" id="MF_02062"/>
    </source>
</evidence>
<evidence type="ECO:0000269" key="3">
    <source>
    </source>
</evidence>
<evidence type="ECO:0000269" key="4">
    <source>
    </source>
</evidence>
<evidence type="ECO:0000269" key="5">
    <source>
    </source>
</evidence>
<evidence type="ECO:0000269" key="6">
    <source>
    </source>
</evidence>
<evidence type="ECO:0000269" key="7">
    <source>
    </source>
</evidence>
<evidence type="ECO:0000269" key="8">
    <source>
    </source>
</evidence>
<evidence type="ECO:0000303" key="9">
    <source>
    </source>
</evidence>
<evidence type="ECO:0000305" key="10"/>
<evidence type="ECO:0000305" key="11">
    <source>
    </source>
</evidence>
<evidence type="ECO:0000305" key="12">
    <source>
    </source>
</evidence>
<proteinExistence type="evidence at protein level"/>
<name>GLTS_ECOLI</name>
<feature type="chain" id="PRO_0000052332" description="Sodium/glutamate symporter">
    <location>
        <begin position="1"/>
        <end position="401"/>
    </location>
</feature>
<feature type="topological domain" description="Periplasmic" evidence="11 12">
    <location>
        <begin position="1"/>
        <end position="6"/>
    </location>
</feature>
<feature type="transmembrane region" description="Helical" evidence="1">
    <location>
        <begin position="7"/>
        <end position="24"/>
    </location>
</feature>
<feature type="topological domain" description="Cytoplasmic" evidence="11 12">
    <location>
        <begin position="25"/>
        <end position="32"/>
    </location>
</feature>
<feature type="transmembrane region" description="Helical" evidence="1">
    <location>
        <begin position="33"/>
        <end position="52"/>
    </location>
</feature>
<feature type="topological domain" description="Periplasmic" evidence="11 12">
    <location>
        <begin position="53"/>
        <end position="69"/>
    </location>
</feature>
<feature type="transmembrane region" description="Helical" evidence="1">
    <location>
        <begin position="70"/>
        <end position="87"/>
    </location>
</feature>
<feature type="topological domain" description="Cytoplasmic" evidence="11 12">
    <location>
        <begin position="88"/>
        <end position="93"/>
    </location>
</feature>
<feature type="transmembrane region" description="Helical" evidence="1">
    <location>
        <begin position="94"/>
        <end position="116"/>
    </location>
</feature>
<feature type="topological domain" description="Periplasmic" evidence="11">
    <location>
        <begin position="117"/>
        <end position="156"/>
    </location>
</feature>
<feature type="transmembrane region" description="Helical" evidence="1">
    <location>
        <begin position="157"/>
        <end position="179"/>
    </location>
</feature>
<feature type="topological domain" description="Cytoplasmic" evidence="11">
    <location>
        <begin position="180"/>
        <end position="212"/>
    </location>
</feature>
<feature type="transmembrane region" description="Helical" evidence="1">
    <location>
        <begin position="213"/>
        <end position="235"/>
    </location>
</feature>
<feature type="topological domain" description="Periplasmic" evidence="11 12">
    <location>
        <begin position="236"/>
        <end position="244"/>
    </location>
</feature>
<feature type="transmembrane region" description="Helical" evidence="1">
    <location>
        <begin position="245"/>
        <end position="267"/>
    </location>
</feature>
<feature type="topological domain" description="Cytoplasmic" evidence="11 12">
    <location>
        <begin position="268"/>
        <end position="276"/>
    </location>
</feature>
<feature type="transmembrane region" description="Helical" evidence="1">
    <location>
        <begin position="277"/>
        <end position="292"/>
    </location>
</feature>
<feature type="topological domain" description="Periplasmic" evidence="11 12">
    <location>
        <begin position="293"/>
        <end position="301"/>
    </location>
</feature>
<feature type="transmembrane region" description="Helical" evidence="1">
    <location>
        <begin position="302"/>
        <end position="324"/>
    </location>
</feature>
<feature type="topological domain" description="Cytoplasmic" evidence="11 12">
    <location>
        <begin position="325"/>
        <end position="367"/>
    </location>
</feature>
<feature type="transmembrane region" description="Helical" evidence="1">
    <location>
        <begin position="368"/>
        <end position="390"/>
    </location>
</feature>
<feature type="topological domain" description="Periplasmic" evidence="3 11 12">
    <location>
        <begin position="391"/>
        <end position="401"/>
    </location>
</feature>
<feature type="sequence conflict" description="In Ref. 1; BAA00517." evidence="10" ref="1">
    <original>G</original>
    <variation>S</variation>
    <location>
        <position position="378"/>
    </location>
</feature>
<protein>
    <recommendedName>
        <fullName evidence="2 10">Sodium/glutamate symporter</fullName>
    </recommendedName>
    <alternativeName>
        <fullName evidence="9">Glutamate permease</fullName>
    </alternativeName>
</protein>
<accession>P0AER8</accession>
<accession>P19933</accession>
<accession>Q2M7W6</accession>
<organism>
    <name type="scientific">Escherichia coli (strain K12)</name>
    <dbReference type="NCBI Taxonomy" id="83333"/>
    <lineage>
        <taxon>Bacteria</taxon>
        <taxon>Pseudomonadati</taxon>
        <taxon>Pseudomonadota</taxon>
        <taxon>Gammaproteobacteria</taxon>
        <taxon>Enterobacterales</taxon>
        <taxon>Enterobacteriaceae</taxon>
        <taxon>Escherichia</taxon>
    </lineage>
</organism>
<reference key="1">
    <citation type="journal article" date="1990" name="J. Biol. Chem.">
        <title>Nucleotide sequence of gltS, the Na+/glutamate symport carrier gene of Escherichia coli B.</title>
        <authorList>
            <person name="Deguchi Y."/>
            <person name="Yamato I."/>
            <person name="Anraku Y."/>
        </authorList>
    </citation>
    <scope>NUCLEOTIDE SEQUENCE [GENOMIC DNA]</scope>
    <source>
        <strain>B</strain>
    </source>
</reference>
<reference key="2">
    <citation type="journal article" date="1991" name="Mol. Gen. Genet.">
        <title>Characterization of the Escherichia coli K12 gltS glutamate permease gene.</title>
        <authorList>
            <person name="Kalman M."/>
            <person name="Gentry D."/>
            <person name="Cashel M."/>
        </authorList>
    </citation>
    <scope>NUCLEOTIDE SEQUENCE [GENOMIC DNA]</scope>
    <source>
        <strain>K12</strain>
    </source>
</reference>
<reference key="3">
    <citation type="journal article" date="1993" name="Genomics">
        <title>DNA sequence and analysis of 136 kilobases of the Escherichia coli genome: organizational symmetry around the origin of replication.</title>
        <authorList>
            <person name="Burland V.D."/>
            <person name="Plunkett G. III"/>
            <person name="Daniels D.L."/>
            <person name="Blattner F.R."/>
        </authorList>
    </citation>
    <scope>NUCLEOTIDE SEQUENCE [LARGE SCALE GENOMIC DNA]</scope>
    <source>
        <strain>K12 / MG1655 / ATCC 47076</strain>
    </source>
</reference>
<reference key="4">
    <citation type="journal article" date="1997" name="Science">
        <title>The complete genome sequence of Escherichia coli K-12.</title>
        <authorList>
            <person name="Blattner F.R."/>
            <person name="Plunkett G. III"/>
            <person name="Bloch C.A."/>
            <person name="Perna N.T."/>
            <person name="Burland V."/>
            <person name="Riley M."/>
            <person name="Collado-Vides J."/>
            <person name="Glasner J.D."/>
            <person name="Rode C.K."/>
            <person name="Mayhew G.F."/>
            <person name="Gregor J."/>
            <person name="Davis N.W."/>
            <person name="Kirkpatrick H.A."/>
            <person name="Goeden M.A."/>
            <person name="Rose D.J."/>
            <person name="Mau B."/>
            <person name="Shao Y."/>
        </authorList>
    </citation>
    <scope>NUCLEOTIDE SEQUENCE [LARGE SCALE GENOMIC DNA]</scope>
    <source>
        <strain>K12 / MG1655 / ATCC 47076</strain>
    </source>
</reference>
<reference key="5">
    <citation type="journal article" date="2006" name="Mol. Syst. Biol.">
        <title>Highly accurate genome sequences of Escherichia coli K-12 strains MG1655 and W3110.</title>
        <authorList>
            <person name="Hayashi K."/>
            <person name="Morooka N."/>
            <person name="Yamamoto Y."/>
            <person name="Fujita K."/>
            <person name="Isono K."/>
            <person name="Choi S."/>
            <person name="Ohtsubo E."/>
            <person name="Baba T."/>
            <person name="Wanner B.L."/>
            <person name="Mori H."/>
            <person name="Horiuchi T."/>
        </authorList>
    </citation>
    <scope>NUCLEOTIDE SEQUENCE [LARGE SCALE GENOMIC DNA]</scope>
    <source>
        <strain>K12 / W3110 / ATCC 27325 / DSM 5911</strain>
    </source>
</reference>
<reference key="6">
    <citation type="journal article" date="1992" name="Gene">
        <title>The nucleotide sequence of recG, the distal spo operon gene in Escherichia coli K-12.</title>
        <authorList>
            <person name="Kalman M."/>
            <person name="Murphy H."/>
            <person name="Cashel M."/>
        </authorList>
    </citation>
    <scope>NUCLEOTIDE SEQUENCE [GENOMIC DNA] OF 379-401</scope>
    <source>
        <strain>K12</strain>
    </source>
</reference>
<reference key="7">
    <citation type="journal article" date="1977" name="J. Biol. Chem.">
        <title>Resolution of the multiplicity of the glutamate and aspartate transport systems of Escherichia coli.</title>
        <authorList>
            <person name="Schellenberg G.D."/>
            <person name="Furlong C.E."/>
        </authorList>
    </citation>
    <scope>FUNCTION</scope>
    <source>
        <strain>D2W</strain>
    </source>
</reference>
<reference key="8">
    <citation type="journal article" date="1989" name="J. Bacteriol.">
        <title>Molecular cloning of gltS and gltP, which encode glutamate carriers of Escherichia coli B.</title>
        <authorList>
            <person name="Deguchi Y."/>
            <person name="Yamato I."/>
            <person name="Anraku Y."/>
        </authorList>
    </citation>
    <scope>FUNCTION</scope>
    <scope>ACTIVITY REGULATION</scope>
    <scope>BIOPHYSICOCHEMICAL PROPERTIES</scope>
    <scope>SUBCELLULAR LOCATION</scope>
    <source>
        <strain>B</strain>
    </source>
</reference>
<reference key="9">
    <citation type="journal article" date="1995" name="Mol. Microbiol.">
        <title>Cation-selectivity of the L-glutamate transporters of Escherichia coli, Bacillus stearothermophilus and Bacillus caldotenax: dependence on the environment in which the proteins are expressed.</title>
        <authorList>
            <person name="Tolner B."/>
            <person name="Ubbink-Kok T."/>
            <person name="Poolman B."/>
            <person name="Konings W.N."/>
        </authorList>
    </citation>
    <scope>FUNCTION</scope>
</reference>
<reference key="10">
    <citation type="journal article" date="2005" name="Science">
        <title>Global topology analysis of the Escherichia coli inner membrane proteome.</title>
        <authorList>
            <person name="Daley D.O."/>
            <person name="Rapp M."/>
            <person name="Granseth E."/>
            <person name="Melen K."/>
            <person name="Drew D."/>
            <person name="von Heijne G."/>
        </authorList>
    </citation>
    <scope>TOPOLOGY [LARGE SCALE ANALYSIS]</scope>
    <scope>SUBCELLULAR LOCATION</scope>
    <source>
        <strain>K12 / MG1655 / ATCC 47076</strain>
    </source>
</reference>
<reference key="11">
    <citation type="journal article" date="2007" name="Biochemistry">
        <title>Membrane topology prediction by hydropathy profile alignment: membrane topology of the Na(+)-glutamate transporter GltS.</title>
        <authorList>
            <person name="Dobrowolski A."/>
            <person name="Sobczak-Elbourne I."/>
            <person name="Lolkema J.S."/>
        </authorList>
    </citation>
    <scope>SUBCELLULAR LOCATION</scope>
    <scope>TOPOLOGY</scope>
</reference>
<reference key="12">
    <citation type="journal article" date="2007" name="FEMS Microbiol. Lett.">
        <title>Membrane topology of the GltS Na+/glutamate permease of Escherichia coli.</title>
        <authorList>
            <person name="Szvetnik A."/>
            <person name="Gal J."/>
            <person name="Kalman M."/>
        </authorList>
    </citation>
    <scope>SUBCELLULAR LOCATION</scope>
    <scope>TOPOLOGY</scope>
</reference>
<dbReference type="EMBL" id="D00626">
    <property type="protein sequence ID" value="BAA00517.1"/>
    <property type="molecule type" value="Genomic_DNA"/>
</dbReference>
<dbReference type="EMBL" id="X17499">
    <property type="protein sequence ID" value="CAA35540.1"/>
    <property type="molecule type" value="Genomic_DNA"/>
</dbReference>
<dbReference type="EMBL" id="L10328">
    <property type="protein sequence ID" value="AAA62006.1"/>
    <property type="molecule type" value="Genomic_DNA"/>
</dbReference>
<dbReference type="EMBL" id="U00096">
    <property type="protein sequence ID" value="AAC76677.1"/>
    <property type="molecule type" value="Genomic_DNA"/>
</dbReference>
<dbReference type="EMBL" id="AP009048">
    <property type="protein sequence ID" value="BAE77640.1"/>
    <property type="molecule type" value="Genomic_DNA"/>
</dbReference>
<dbReference type="EMBL" id="M64367">
    <property type="protein sequence ID" value="AAA24514.1"/>
    <property type="molecule type" value="Genomic_DNA"/>
</dbReference>
<dbReference type="PIR" id="G65166">
    <property type="entry name" value="YOECNQ"/>
</dbReference>
<dbReference type="RefSeq" id="NP_418110.1">
    <property type="nucleotide sequence ID" value="NC_000913.3"/>
</dbReference>
<dbReference type="RefSeq" id="WP_000468833.1">
    <property type="nucleotide sequence ID" value="NZ_SSZK01000043.1"/>
</dbReference>
<dbReference type="BioGRID" id="4262574">
    <property type="interactions" value="14"/>
</dbReference>
<dbReference type="DIP" id="DIP-48023N"/>
<dbReference type="FunCoup" id="P0AER8">
    <property type="interactions" value="53"/>
</dbReference>
<dbReference type="IntAct" id="P0AER8">
    <property type="interactions" value="1"/>
</dbReference>
<dbReference type="STRING" id="511145.b3653"/>
<dbReference type="TCDB" id="2.A.27.1.1">
    <property type="family name" value="the glutamate:na(+) symporter (ess) family"/>
</dbReference>
<dbReference type="PaxDb" id="511145-b3653"/>
<dbReference type="EnsemblBacteria" id="AAC76677">
    <property type="protein sequence ID" value="AAC76677"/>
    <property type="gene ID" value="b3653"/>
</dbReference>
<dbReference type="GeneID" id="93778368"/>
<dbReference type="GeneID" id="948166"/>
<dbReference type="KEGG" id="ecj:JW3628"/>
<dbReference type="KEGG" id="eco:b3653"/>
<dbReference type="KEGG" id="ecoc:C3026_19790"/>
<dbReference type="PATRIC" id="fig|1411691.4.peg.3053"/>
<dbReference type="EchoBASE" id="EB0401"/>
<dbReference type="eggNOG" id="COG0786">
    <property type="taxonomic scope" value="Bacteria"/>
</dbReference>
<dbReference type="HOGENOM" id="CLU_040907_0_0_6"/>
<dbReference type="InParanoid" id="P0AER8"/>
<dbReference type="OMA" id="TLPTFVW"/>
<dbReference type="OrthoDB" id="4921038at2"/>
<dbReference type="PhylomeDB" id="P0AER8"/>
<dbReference type="BioCyc" id="EcoCyc:GLTS-MONOMER"/>
<dbReference type="BioCyc" id="MetaCyc:GLTS-MONOMER"/>
<dbReference type="PRO" id="PR:P0AER8"/>
<dbReference type="Proteomes" id="UP000000625">
    <property type="component" value="Chromosome"/>
</dbReference>
<dbReference type="GO" id="GO:0005886">
    <property type="term" value="C:plasma membrane"/>
    <property type="evidence" value="ECO:0000314"/>
    <property type="project" value="EcoCyc"/>
</dbReference>
<dbReference type="GO" id="GO:0015501">
    <property type="term" value="F:glutamate:sodium symporter activity"/>
    <property type="evidence" value="ECO:0000314"/>
    <property type="project" value="EcoCyc"/>
</dbReference>
<dbReference type="GO" id="GO:0015293">
    <property type="term" value="F:symporter activity"/>
    <property type="evidence" value="ECO:0000314"/>
    <property type="project" value="EcoCyc"/>
</dbReference>
<dbReference type="GO" id="GO:0015813">
    <property type="term" value="P:L-glutamate transmembrane transport"/>
    <property type="evidence" value="ECO:0000269"/>
    <property type="project" value="EcoCyc"/>
</dbReference>
<dbReference type="HAMAP" id="MF_02062">
    <property type="entry name" value="GltS"/>
    <property type="match status" value="1"/>
</dbReference>
<dbReference type="InterPro" id="IPR004445">
    <property type="entry name" value="GltS"/>
</dbReference>
<dbReference type="NCBIfam" id="TIGR00210">
    <property type="entry name" value="gltS"/>
    <property type="match status" value="1"/>
</dbReference>
<dbReference type="PANTHER" id="PTHR36178">
    <property type="entry name" value="SLR0625 PROTEIN"/>
    <property type="match status" value="1"/>
</dbReference>
<dbReference type="PANTHER" id="PTHR36178:SF1">
    <property type="entry name" value="SODIUM_GLUTAMATE SYMPORTER"/>
    <property type="match status" value="1"/>
</dbReference>
<dbReference type="Pfam" id="PF03616">
    <property type="entry name" value="Glt_symporter"/>
    <property type="match status" value="1"/>
</dbReference>
<gene>
    <name evidence="2" type="primary">gltS</name>
    <name type="synonym">gltC</name>
    <name type="ordered locus">b3653</name>
    <name type="ordered locus">JW3628</name>
</gene>
<sequence length="401" mass="42425">MFHLDTLATLVAATLTLLLGRKLVHSVSFLKKYTIPEPVAGGLLVALALLVLKKSMGWEVNFDMSLRDPLMLAFFATIGLNANIASLRAGGRVVGIFLIVVVGLLVMQNAIGIGMASLLGLDPLMGLLAGSITLSGGHGTGAAWSKLFIERYGFTNATEVAMACATFGLVLGGLIGGPVARYLVKHSTTPNGIPDDQEVPTAFEKPDVGRMITSLVLIETIALIAICLTVGKIVAQLLAGTAFELPTFVCVLFVGVILSNGLSIMGFYRVFERAVSVLGNVSLSLFLAMALMGLKLWELASLALPMLAILVVQTIFMALYAIFVTWRMMGKNYDAAVLAAGHCGFGLGATPTAIANMQAITERFGPSHMAFLVVPMVGAFFIDIVNALVIKLYLMLPIFAG</sequence>
<keyword id="KW-0029">Amino-acid transport</keyword>
<keyword id="KW-0997">Cell inner membrane</keyword>
<keyword id="KW-1003">Cell membrane</keyword>
<keyword id="KW-0406">Ion transport</keyword>
<keyword id="KW-0472">Membrane</keyword>
<keyword id="KW-1185">Reference proteome</keyword>
<keyword id="KW-0915">Sodium</keyword>
<keyword id="KW-0739">Sodium transport</keyword>
<keyword id="KW-0769">Symport</keyword>
<keyword id="KW-0812">Transmembrane</keyword>
<keyword id="KW-1133">Transmembrane helix</keyword>
<keyword id="KW-0813">Transport</keyword>
<comment type="function">
    <text evidence="2 6 7 8">Catalyzes the sodium-dependent, binding-protein-independent transport of glutamate.</text>
</comment>
<comment type="activity regulation">
    <text evidence="6">Inhibited by the uncoupler carbonylcyanide m-chlorophenylhydrazone (CCCP) and the ionophore monensin.</text>
</comment>
<comment type="biophysicochemical properties">
    <kinetics>
        <Vmax evidence="6">5.2 nmol/min/mg enzyme</Vmax>
    </kinetics>
</comment>
<comment type="subcellular location">
    <subcellularLocation>
        <location evidence="2 3 4 5 6">Cell inner membrane</location>
        <topology evidence="2 4 5">Multi-pass membrane protein</topology>
    </subcellularLocation>
</comment>
<comment type="similarity">
    <text evidence="2 10">Belongs to the glutamate:Na(+) symporter (ESS) (TC 2.A.27) family.</text>
</comment>